<proteinExistence type="evidence at protein level"/>
<organism>
    <name type="scientific">Homo sapiens</name>
    <name type="common">Human</name>
    <dbReference type="NCBI Taxonomy" id="9606"/>
    <lineage>
        <taxon>Eukaryota</taxon>
        <taxon>Metazoa</taxon>
        <taxon>Chordata</taxon>
        <taxon>Craniata</taxon>
        <taxon>Vertebrata</taxon>
        <taxon>Euteleostomi</taxon>
        <taxon>Mammalia</taxon>
        <taxon>Eutheria</taxon>
        <taxon>Euarchontoglires</taxon>
        <taxon>Primates</taxon>
        <taxon>Haplorrhini</taxon>
        <taxon>Catarrhini</taxon>
        <taxon>Hominidae</taxon>
        <taxon>Homo</taxon>
    </lineage>
</organism>
<sequence>MGLCKCPKRKVTNLFCFEHRVNVCEHCLVANHAKCIVQSYLQWLQDSDYNPNCRLCNIPLASRETTRLVCYDLFHWACLNERAAQLPRNTAPAGYQCPSCNGPIFPPTNLAGPVASALREKLATVNWARAGLGLPLIDEVVSPEPEPLNTSDFSDWSSFNASSTPGPEEVDSASAAPAFYSQAPRPPASPGRPEQHTVIHMGNPEPLTHAPRKVYDTRDDDRTPGLHGDCDDDKYRRRPALGWLARLLRSRAGSRKRPLTLLQRAGLLLLLGLLGFLALLALMSRLGRAAADSDPNLDPLMNPHIRVGPS</sequence>
<protein>
    <recommendedName>
        <fullName>Zinc finger protein-like 1</fullName>
    </recommendedName>
    <alternativeName>
        <fullName>Zinc finger protein MCG4</fullName>
    </alternativeName>
</protein>
<dbReference type="EMBL" id="AF001891">
    <property type="protein sequence ID" value="AAB86533.1"/>
    <property type="status" value="ALT_FRAME"/>
    <property type="molecule type" value="mRNA"/>
</dbReference>
<dbReference type="EMBL" id="AF030291">
    <property type="protein sequence ID" value="AAF21634.1"/>
    <property type="molecule type" value="mRNA"/>
</dbReference>
<dbReference type="EMBL" id="AF043611">
    <property type="protein sequence ID" value="AAD08644.1"/>
    <property type="molecule type" value="mRNA"/>
</dbReference>
<dbReference type="EMBL" id="AK291964">
    <property type="protein sequence ID" value="BAF84653.1"/>
    <property type="molecule type" value="mRNA"/>
</dbReference>
<dbReference type="EMBL" id="AP003068">
    <property type="status" value="NOT_ANNOTATED_CDS"/>
    <property type="molecule type" value="Genomic_DNA"/>
</dbReference>
<dbReference type="EMBL" id="CH471076">
    <property type="protein sequence ID" value="EAW74344.1"/>
    <property type="molecule type" value="Genomic_DNA"/>
</dbReference>
<dbReference type="EMBL" id="BC012530">
    <property type="protein sequence ID" value="AAH12530.1"/>
    <property type="molecule type" value="mRNA"/>
</dbReference>
<dbReference type="EMBL" id="BC012814">
    <property type="protein sequence ID" value="AAH12814.1"/>
    <property type="molecule type" value="mRNA"/>
</dbReference>
<dbReference type="CCDS" id="CCDS8092.1"/>
<dbReference type="RefSeq" id="NP_006773.2">
    <property type="nucleotide sequence ID" value="NM_006782.3"/>
</dbReference>
<dbReference type="BioGRID" id="113374">
    <property type="interactions" value="468"/>
</dbReference>
<dbReference type="FunCoup" id="O95159">
    <property type="interactions" value="3267"/>
</dbReference>
<dbReference type="IntAct" id="O95159">
    <property type="interactions" value="123"/>
</dbReference>
<dbReference type="MINT" id="O95159"/>
<dbReference type="STRING" id="9606.ENSP00000294258"/>
<dbReference type="GlyGen" id="O95159">
    <property type="glycosylation" value="2 sites, 2 O-linked glycans (1 site)"/>
</dbReference>
<dbReference type="iPTMnet" id="O95159"/>
<dbReference type="PhosphoSitePlus" id="O95159"/>
<dbReference type="SwissPalm" id="O95159"/>
<dbReference type="BioMuta" id="ZFPL1"/>
<dbReference type="jPOST" id="O95159"/>
<dbReference type="MassIVE" id="O95159"/>
<dbReference type="PaxDb" id="9606-ENSP00000294258"/>
<dbReference type="PeptideAtlas" id="O95159"/>
<dbReference type="ProteomicsDB" id="50676"/>
<dbReference type="Pumba" id="O95159"/>
<dbReference type="Antibodypedia" id="2657">
    <property type="antibodies" value="103 antibodies from 19 providers"/>
</dbReference>
<dbReference type="DNASU" id="7542"/>
<dbReference type="Ensembl" id="ENST00000294258.8">
    <property type="protein sequence ID" value="ENSP00000294258.3"/>
    <property type="gene ID" value="ENSG00000162300.13"/>
</dbReference>
<dbReference type="GeneID" id="7542"/>
<dbReference type="KEGG" id="hsa:7542"/>
<dbReference type="MANE-Select" id="ENST00000294258.8">
    <property type="protein sequence ID" value="ENSP00000294258.3"/>
    <property type="RefSeq nucleotide sequence ID" value="NM_006782.4"/>
    <property type="RefSeq protein sequence ID" value="NP_006773.2"/>
</dbReference>
<dbReference type="UCSC" id="uc001ocq.2">
    <property type="organism name" value="human"/>
</dbReference>
<dbReference type="AGR" id="HGNC:12868"/>
<dbReference type="CTD" id="7542"/>
<dbReference type="DisGeNET" id="7542"/>
<dbReference type="GeneCards" id="ZFPL1"/>
<dbReference type="HGNC" id="HGNC:12868">
    <property type="gene designation" value="ZFPL1"/>
</dbReference>
<dbReference type="HPA" id="ENSG00000162300">
    <property type="expression patterns" value="Low tissue specificity"/>
</dbReference>
<dbReference type="MIM" id="619397">
    <property type="type" value="gene"/>
</dbReference>
<dbReference type="neXtProt" id="NX_O95159"/>
<dbReference type="OpenTargets" id="ENSG00000162300"/>
<dbReference type="PharmGKB" id="PA37457"/>
<dbReference type="VEuPathDB" id="HostDB:ENSG00000162300"/>
<dbReference type="eggNOG" id="KOG3970">
    <property type="taxonomic scope" value="Eukaryota"/>
</dbReference>
<dbReference type="GeneTree" id="ENSGT00390000009753"/>
<dbReference type="HOGENOM" id="CLU_075387_0_0_1"/>
<dbReference type="InParanoid" id="O95159"/>
<dbReference type="OMA" id="CEHCMVA"/>
<dbReference type="OrthoDB" id="1916590at2759"/>
<dbReference type="PAN-GO" id="O95159">
    <property type="GO annotations" value="1 GO annotation based on evolutionary models"/>
</dbReference>
<dbReference type="PhylomeDB" id="O95159"/>
<dbReference type="TreeFam" id="TF315090"/>
<dbReference type="PathwayCommons" id="O95159"/>
<dbReference type="SignaLink" id="O95159"/>
<dbReference type="SIGNOR" id="O95159"/>
<dbReference type="BioGRID-ORCS" id="7542">
    <property type="hits" value="20 hits in 1194 CRISPR screens"/>
</dbReference>
<dbReference type="ChiTaRS" id="ZFPL1">
    <property type="organism name" value="human"/>
</dbReference>
<dbReference type="GenomeRNAi" id="7542"/>
<dbReference type="Pharos" id="O95159">
    <property type="development level" value="Tbio"/>
</dbReference>
<dbReference type="PRO" id="PR:O95159"/>
<dbReference type="Proteomes" id="UP000005640">
    <property type="component" value="Chromosome 11"/>
</dbReference>
<dbReference type="RNAct" id="O95159">
    <property type="molecule type" value="protein"/>
</dbReference>
<dbReference type="Bgee" id="ENSG00000162300">
    <property type="expression patterns" value="Expressed in mucosa of transverse colon and 190 other cell types or tissues"/>
</dbReference>
<dbReference type="ExpressionAtlas" id="O95159">
    <property type="expression patterns" value="baseline and differential"/>
</dbReference>
<dbReference type="GO" id="GO:0005794">
    <property type="term" value="C:Golgi apparatus"/>
    <property type="evidence" value="ECO:0000314"/>
    <property type="project" value="HPA"/>
</dbReference>
<dbReference type="GO" id="GO:0016020">
    <property type="term" value="C:membrane"/>
    <property type="evidence" value="ECO:0007669"/>
    <property type="project" value="UniProtKB-KW"/>
</dbReference>
<dbReference type="GO" id="GO:0005634">
    <property type="term" value="C:nucleus"/>
    <property type="evidence" value="ECO:0000303"/>
    <property type="project" value="UniProtKB"/>
</dbReference>
<dbReference type="GO" id="GO:0003677">
    <property type="term" value="F:DNA binding"/>
    <property type="evidence" value="ECO:0000303"/>
    <property type="project" value="UniProtKB"/>
</dbReference>
<dbReference type="GO" id="GO:0008270">
    <property type="term" value="F:zinc ion binding"/>
    <property type="evidence" value="ECO:0000303"/>
    <property type="project" value="UniProtKB"/>
</dbReference>
<dbReference type="GO" id="GO:0006355">
    <property type="term" value="P:regulation of DNA-templated transcription"/>
    <property type="evidence" value="ECO:0000303"/>
    <property type="project" value="UniProtKB"/>
</dbReference>
<dbReference type="GO" id="GO:0016192">
    <property type="term" value="P:vesicle-mediated transport"/>
    <property type="evidence" value="ECO:0007669"/>
    <property type="project" value="UniProtKB-KW"/>
</dbReference>
<dbReference type="CDD" id="cd16487">
    <property type="entry name" value="mRING-H2-C3DHC3_ZFPL1"/>
    <property type="match status" value="1"/>
</dbReference>
<dbReference type="Gene3D" id="3.30.40.10">
    <property type="entry name" value="Zinc/RING finger domain, C3HC4 (zinc finger)"/>
    <property type="match status" value="1"/>
</dbReference>
<dbReference type="InterPro" id="IPR039043">
    <property type="entry name" value="ZFPL1"/>
</dbReference>
<dbReference type="InterPro" id="IPR013083">
    <property type="entry name" value="Znf_RING/FYVE/PHD"/>
</dbReference>
<dbReference type="PANTHER" id="PTHR12981">
    <property type="entry name" value="ZINC FINGER PROTEIN-LIKE 1"/>
    <property type="match status" value="1"/>
</dbReference>
<dbReference type="PANTHER" id="PTHR12981:SF0">
    <property type="entry name" value="ZINC FINGER PROTEIN-LIKE 1"/>
    <property type="match status" value="1"/>
</dbReference>
<feature type="chain" id="PRO_0000056318" description="Zinc finger protein-like 1">
    <location>
        <begin position="1"/>
        <end position="310"/>
    </location>
</feature>
<feature type="topological domain" description="Cytoplasmic" evidence="1">
    <location>
        <begin position="1"/>
        <end position="266"/>
    </location>
</feature>
<feature type="transmembrane region" description="Helical" evidence="1">
    <location>
        <begin position="267"/>
        <end position="287"/>
    </location>
</feature>
<feature type="topological domain" description="Lumenal" evidence="1">
    <location>
        <begin position="288"/>
        <end position="310"/>
    </location>
</feature>
<feature type="zinc finger region" description="B box-type; degenerate">
    <location>
        <begin position="1"/>
        <end position="43"/>
    </location>
</feature>
<feature type="zinc finger region" description="RING-type; degenerate">
    <location>
        <begin position="53"/>
        <end position="101"/>
    </location>
</feature>
<feature type="region of interest" description="Disordered" evidence="2">
    <location>
        <begin position="145"/>
        <end position="231"/>
    </location>
</feature>
<feature type="compositionally biased region" description="Polar residues" evidence="2">
    <location>
        <begin position="148"/>
        <end position="165"/>
    </location>
</feature>
<feature type="compositionally biased region" description="Basic and acidic residues" evidence="2">
    <location>
        <begin position="213"/>
        <end position="224"/>
    </location>
</feature>
<feature type="sequence variant" id="VAR_034472" description="In dbSNP:rs35251366.">
    <original>R</original>
    <variation>Q</variation>
    <location>
        <position position="218"/>
    </location>
</feature>
<feature type="mutagenesis site" description="Impairs the interaction with OLGA2/GM130 and cis-Golgi assembly." evidence="3">
    <original>C</original>
    <variation>A</variation>
    <location>
        <position position="27"/>
    </location>
</feature>
<feature type="mutagenesis site" description="Impairs the interaction with OLGA2/GM130 and cis-Golgi assembly." evidence="3">
    <original>C</original>
    <variation>A</variation>
    <location>
        <position position="53"/>
    </location>
</feature>
<feature type="sequence conflict" description="In Ref. 1; AAB86533 and 3; AAD08644." evidence="5" ref="1 3">
    <original>Q</original>
    <variation>R</variation>
    <location>
        <position position="182"/>
    </location>
</feature>
<feature type="sequence conflict" description="In Ref. 1; AAB86533." evidence="5" ref="1">
    <original>R</original>
    <variation>Q</variation>
    <location>
        <position position="246"/>
    </location>
</feature>
<name>ZFPL1_HUMAN</name>
<comment type="function">
    <text evidence="3">Required for cis-Golgi integrity and efficient ER to Golgi transport. Involved in the maintenance of the integrity of the cis-Golgi, possibly via its interaction with GOLGA2/GM130.</text>
</comment>
<comment type="subunit">
    <text evidence="3">Interacts with GOLGA2/GM130.</text>
</comment>
<comment type="interaction">
    <interactant intactId="EBI-718439">
        <id>O95159</id>
    </interactant>
    <interactant intactId="EBI-12078468">
        <id>Q8IVF2-3</id>
        <label>AHNAK2</label>
    </interactant>
    <organismsDiffer>false</organismsDiffer>
    <experiments>3</experiments>
</comment>
<comment type="interaction">
    <interactant intactId="EBI-718439">
        <id>O95159</id>
    </interactant>
    <interactant intactId="EBI-700794">
        <id>Q13323</id>
        <label>BIK</label>
    </interactant>
    <organismsDiffer>false</organismsDiffer>
    <experiments>3</experiments>
</comment>
<comment type="interaction">
    <interactant intactId="EBI-718439">
        <id>O95159</id>
    </interactant>
    <interactant intactId="EBI-7996695">
        <id>Q8WZ55</id>
        <label>BSND</label>
    </interactant>
    <organismsDiffer>false</organismsDiffer>
    <experiments>3</experiments>
</comment>
<comment type="interaction">
    <interactant intactId="EBI-718439">
        <id>O95159</id>
    </interactant>
    <interactant intactId="EBI-1211297">
        <id>P07766</id>
        <label>CD3E</label>
    </interactant>
    <organismsDiffer>false</organismsDiffer>
    <experiments>3</experiments>
</comment>
<comment type="interaction">
    <interactant intactId="EBI-718439">
        <id>O95159</id>
    </interactant>
    <interactant intactId="EBI-2130213">
        <id>Q99675</id>
        <label>CGRRF1</label>
    </interactant>
    <organismsDiffer>false</organismsDiffer>
    <experiments>3</experiments>
</comment>
<comment type="interaction">
    <interactant intactId="EBI-718439">
        <id>O95159</id>
    </interactant>
    <interactant intactId="EBI-2873246">
        <id>Q8IUN9</id>
        <label>CLEC10A</label>
    </interactant>
    <organismsDiffer>false</organismsDiffer>
    <experiments>3</experiments>
</comment>
<comment type="interaction">
    <interactant intactId="EBI-718439">
        <id>O95159</id>
    </interactant>
    <interactant intactId="EBI-11989440">
        <id>Q9BXN2-6</id>
        <label>CLEC7A</label>
    </interactant>
    <organismsDiffer>false</organismsDiffer>
    <experiments>3</experiments>
</comment>
<comment type="interaction">
    <interactant intactId="EBI-718439">
        <id>O95159</id>
    </interactant>
    <interactant intactId="EBI-18013275">
        <id>Q7Z7G2</id>
        <label>CPLX4</label>
    </interactant>
    <organismsDiffer>false</organismsDiffer>
    <experiments>3</experiments>
</comment>
<comment type="interaction">
    <interactant intactId="EBI-718439">
        <id>O95159</id>
    </interactant>
    <interactant intactId="EBI-6942903">
        <id>Q96BA8</id>
        <label>CREB3L1</label>
    </interactant>
    <organismsDiffer>false</organismsDiffer>
    <experiments>5</experiments>
</comment>
<comment type="interaction">
    <interactant intactId="EBI-718439">
        <id>O95159</id>
    </interactant>
    <interactant intactId="EBI-8637742">
        <id>Q53TN4</id>
        <label>CYBRD1</label>
    </interactant>
    <organismsDiffer>false</organismsDiffer>
    <experiments>3</experiments>
</comment>
<comment type="interaction">
    <interactant intactId="EBI-718439">
        <id>O95159</id>
    </interactant>
    <interactant intactId="EBI-3915253">
        <id>Q15125</id>
        <label>EBP</label>
    </interactant>
    <organismsDiffer>false</organismsDiffer>
    <experiments>3</experiments>
</comment>
<comment type="interaction">
    <interactant intactId="EBI-718439">
        <id>O95159</id>
    </interactant>
    <interactant intactId="EBI-18535450">
        <id>Q9GZR5</id>
        <label>ELOVL4</label>
    </interactant>
    <organismsDiffer>false</organismsDiffer>
    <experiments>3</experiments>
</comment>
<comment type="interaction">
    <interactant intactId="EBI-718439">
        <id>O95159</id>
    </interactant>
    <interactant intactId="EBI-781551">
        <id>Q9Y282</id>
        <label>ERGIC3</label>
    </interactant>
    <organismsDiffer>false</organismsDiffer>
    <experiments>5</experiments>
</comment>
<comment type="interaction">
    <interactant intactId="EBI-718439">
        <id>O95159</id>
    </interactant>
    <interactant intactId="EBI-18304435">
        <id>Q5JX71</id>
        <label>FAM209A</label>
    </interactant>
    <organismsDiffer>false</organismsDiffer>
    <experiments>3</experiments>
</comment>
<comment type="interaction">
    <interactant intactId="EBI-718439">
        <id>O95159</id>
    </interactant>
    <interactant intactId="EBI-743099">
        <id>Q969F0</id>
        <label>FATE1</label>
    </interactant>
    <organismsDiffer>false</organismsDiffer>
    <experiments>3</experiments>
</comment>
<comment type="interaction">
    <interactant intactId="EBI-718439">
        <id>O95159</id>
    </interactant>
    <interactant intactId="EBI-3918971">
        <id>Q9Y680</id>
        <label>FKBP7</label>
    </interactant>
    <organismsDiffer>false</organismsDiffer>
    <experiments>3</experiments>
</comment>
<comment type="interaction">
    <interactant intactId="EBI-718439">
        <id>O95159</id>
    </interactant>
    <interactant intactId="EBI-724839">
        <id>Q14318</id>
        <label>FKBP8</label>
    </interactant>
    <organismsDiffer>false</organismsDiffer>
    <experiments>3</experiments>
</comment>
<comment type="interaction">
    <interactant intactId="EBI-718439">
        <id>O95159</id>
    </interactant>
    <interactant intactId="EBI-12142257">
        <id>Q8TBE3</id>
        <label>FNDC9</label>
    </interactant>
    <organismsDiffer>false</organismsDiffer>
    <experiments>3</experiments>
</comment>
<comment type="interaction">
    <interactant intactId="EBI-718439">
        <id>O95159</id>
    </interactant>
    <interactant intactId="EBI-6911547">
        <id>A2A2Y4</id>
        <label>FRMD3</label>
    </interactant>
    <organismsDiffer>false</organismsDiffer>
    <experiments>3</experiments>
</comment>
<comment type="interaction">
    <interactant intactId="EBI-718439">
        <id>O95159</id>
    </interactant>
    <interactant intactId="EBI-3917143">
        <id>Q5T7V8</id>
        <label>GORAB</label>
    </interactant>
    <organismsDiffer>false</organismsDiffer>
    <experiments>3</experiments>
</comment>
<comment type="interaction">
    <interactant intactId="EBI-718439">
        <id>O95159</id>
    </interactant>
    <interactant intactId="EBI-18076404">
        <id>O15529</id>
        <label>GPR42</label>
    </interactant>
    <organismsDiffer>false</organismsDiffer>
    <experiments>3</experiments>
</comment>
<comment type="interaction">
    <interactant intactId="EBI-718439">
        <id>O95159</id>
    </interactant>
    <interactant intactId="EBI-11427100">
        <id>P31937</id>
        <label>HIBADH</label>
    </interactant>
    <organismsDiffer>false</organismsDiffer>
    <experiments>3</experiments>
</comment>
<comment type="interaction">
    <interactant intactId="EBI-718439">
        <id>O95159</id>
    </interactant>
    <interactant intactId="EBI-749265">
        <id>Q8N6L0</id>
        <label>KASH5</label>
    </interactant>
    <organismsDiffer>false</organismsDiffer>
    <experiments>3</experiments>
</comment>
<comment type="interaction">
    <interactant intactId="EBI-718439">
        <id>O95159</id>
    </interactant>
    <interactant intactId="EBI-9018187">
        <id>P26715</id>
        <label>KLRC1</label>
    </interactant>
    <organismsDiffer>false</organismsDiffer>
    <experiments>3</experiments>
</comment>
<comment type="interaction">
    <interactant intactId="EBI-718439">
        <id>O95159</id>
    </interactant>
    <interactant intactId="EBI-10173166">
        <id>Q5T700</id>
        <label>LDLRAD1</label>
    </interactant>
    <organismsDiffer>false</organismsDiffer>
    <experiments>3</experiments>
</comment>
<comment type="interaction">
    <interactant intactId="EBI-718439">
        <id>O95159</id>
    </interactant>
    <interactant intactId="EBI-17490413">
        <id>A8MZ59</id>
        <label>LEUTX</label>
    </interactant>
    <organismsDiffer>false</organismsDiffer>
    <experiments>3</experiments>
</comment>
<comment type="interaction">
    <interactant intactId="EBI-718439">
        <id>O95159</id>
    </interactant>
    <interactant intactId="EBI-2830566">
        <id>Q9H400</id>
        <label>LIME1</label>
    </interactant>
    <organismsDiffer>false</organismsDiffer>
    <experiments>3</experiments>
</comment>
<comment type="interaction">
    <interactant intactId="EBI-718439">
        <id>O95159</id>
    </interactant>
    <interactant intactId="EBI-11956541">
        <id>Q9GZY8-5</id>
        <label>MFF</label>
    </interactant>
    <organismsDiffer>false</organismsDiffer>
    <experiments>3</experiments>
</comment>
<comment type="interaction">
    <interactant intactId="EBI-718439">
        <id>O95159</id>
    </interactant>
    <interactant intactId="EBI-373355">
        <id>Q5SR56</id>
        <label>MFSD14B</label>
    </interactant>
    <organismsDiffer>false</organismsDiffer>
    <experiments>3</experiments>
</comment>
<comment type="interaction">
    <interactant intactId="EBI-718439">
        <id>O95159</id>
    </interactant>
    <interactant intactId="EBI-724754">
        <id>O14880</id>
        <label>MGST3</label>
    </interactant>
    <organismsDiffer>false</organismsDiffer>
    <experiments>3</experiments>
</comment>
<comment type="interaction">
    <interactant intactId="EBI-718439">
        <id>O95159</id>
    </interactant>
    <interactant intactId="EBI-8449636">
        <id>P30301</id>
        <label>MIP</label>
    </interactant>
    <organismsDiffer>false</organismsDiffer>
    <experiments>3</experiments>
</comment>
<comment type="interaction">
    <interactant intactId="EBI-718439">
        <id>O95159</id>
    </interactant>
    <interactant intactId="EBI-1045440">
        <id>Q9HC36</id>
        <label>MRM3</label>
    </interactant>
    <organismsDiffer>false</organismsDiffer>
    <experiments>3</experiments>
</comment>
<comment type="interaction">
    <interactant intactId="EBI-718439">
        <id>O95159</id>
    </interactant>
    <interactant intactId="EBI-750085">
        <id>Q9Y676</id>
        <label>MRPS18B</label>
    </interactant>
    <organismsDiffer>false</organismsDiffer>
    <experiments>3</experiments>
</comment>
<comment type="interaction">
    <interactant intactId="EBI-718439">
        <id>O95159</id>
    </interactant>
    <interactant intactId="EBI-12806656">
        <id>Q96HJ5</id>
        <label>MS4A3</label>
    </interactant>
    <organismsDiffer>false</organismsDiffer>
    <experiments>3</experiments>
</comment>
<comment type="interaction">
    <interactant intactId="EBI-718439">
        <id>O95159</id>
    </interactant>
    <interactant intactId="EBI-7825321">
        <id>Q96E29</id>
        <label>MTERF3</label>
    </interactant>
    <organismsDiffer>false</organismsDiffer>
    <experiments>3</experiments>
</comment>
<comment type="interaction">
    <interactant intactId="EBI-718439">
        <id>O95159</id>
    </interactant>
    <interactant intactId="EBI-1050125">
        <id>O15173</id>
        <label>PGRMC2</label>
    </interactant>
    <organismsDiffer>false</organismsDiffer>
    <experiments>3</experiments>
</comment>
<comment type="interaction">
    <interactant intactId="EBI-718439">
        <id>O95159</id>
    </interactant>
    <interactant intactId="EBI-949945">
        <id>Q53GL0</id>
        <label>PLEKHO1</label>
    </interactant>
    <organismsDiffer>false</organismsDiffer>
    <experiments>3</experiments>
</comment>
<comment type="interaction">
    <interactant intactId="EBI-718439">
        <id>O95159</id>
    </interactant>
    <interactant intactId="EBI-3919694">
        <id>P15151</id>
        <label>PVR</label>
    </interactant>
    <organismsDiffer>false</organismsDiffer>
    <experiments>3</experiments>
</comment>
<comment type="interaction">
    <interactant intactId="EBI-718439">
        <id>O95159</id>
    </interactant>
    <interactant intactId="EBI-10269209">
        <id>Q8NC24</id>
        <label>RELL2</label>
    </interactant>
    <organismsDiffer>false</organismsDiffer>
    <experiments>3</experiments>
</comment>
<comment type="interaction">
    <interactant intactId="EBI-718439">
        <id>O95159</id>
    </interactant>
    <interactant intactId="EBI-17247926">
        <id>Q9NY72</id>
        <label>SCN3B</label>
    </interactant>
    <organismsDiffer>false</organismsDiffer>
    <experiments>3</experiments>
</comment>
<comment type="interaction">
    <interactant intactId="EBI-718439">
        <id>O95159</id>
    </interactant>
    <interactant intactId="EBI-10977284">
        <id>Q8NHU3</id>
        <label>SGMS2</label>
    </interactant>
    <organismsDiffer>false</organismsDiffer>
    <experiments>3</experiments>
</comment>
<comment type="interaction">
    <interactant intactId="EBI-718439">
        <id>O95159</id>
    </interactant>
    <interactant intactId="EBI-18037857">
        <id>Q3SXP7</id>
        <label>SHISAL1</label>
    </interactant>
    <organismsDiffer>false</organismsDiffer>
    <experiments>3</experiments>
</comment>
<comment type="interaction">
    <interactant intactId="EBI-718439">
        <id>O95159</id>
    </interactant>
    <interactant intactId="EBI-18159983">
        <id>Q3KNW5</id>
        <label>SLC10A6</label>
    </interactant>
    <organismsDiffer>false</organismsDiffer>
    <experiments>3</experiments>
</comment>
<comment type="interaction">
    <interactant intactId="EBI-718439">
        <id>O95159</id>
    </interactant>
    <interactant intactId="EBI-3923779">
        <id>Q9BZV2</id>
        <label>SLC19A3</label>
    </interactant>
    <organismsDiffer>false</organismsDiffer>
    <experiments>3</experiments>
</comment>
<comment type="interaction">
    <interactant intactId="EBI-718439">
        <id>O95159</id>
    </interactant>
    <interactant intactId="EBI-5235586">
        <id>Q8TBB6</id>
        <label>SLC7A14</label>
    </interactant>
    <organismsDiffer>false</organismsDiffer>
    <experiments>3</experiments>
</comment>
<comment type="interaction">
    <interactant intactId="EBI-718439">
        <id>O95159</id>
    </interactant>
    <interactant intactId="EBI-741850">
        <id>Q9BZL3</id>
        <label>SMIM3</label>
    </interactant>
    <organismsDiffer>false</organismsDiffer>
    <experiments>5</experiments>
</comment>
<comment type="interaction">
    <interactant intactId="EBI-718439">
        <id>O95159</id>
    </interactant>
    <interactant intactId="EBI-17280858">
        <id>Q8WWF3</id>
        <label>SSMEM1</label>
    </interactant>
    <organismsDiffer>false</organismsDiffer>
    <experiments>3</experiments>
</comment>
<comment type="interaction">
    <interactant intactId="EBI-718439">
        <id>O95159</id>
    </interactant>
    <interactant intactId="EBI-712466">
        <id>Q16623</id>
        <label>STX1A</label>
    </interactant>
    <organismsDiffer>false</organismsDiffer>
    <experiments>3</experiments>
</comment>
<comment type="interaction">
    <interactant intactId="EBI-718439">
        <id>O95159</id>
    </interactant>
    <interactant intactId="EBI-11956649">
        <id>P32856-2</id>
        <label>STX2</label>
    </interactant>
    <organismsDiffer>false</organismsDiffer>
    <experiments>3</experiments>
</comment>
<comment type="interaction">
    <interactant intactId="EBI-718439">
        <id>O95159</id>
    </interactant>
    <interactant intactId="EBI-744942">
        <id>Q12846</id>
        <label>STX4</label>
    </interactant>
    <organismsDiffer>false</organismsDiffer>
    <experiments>3</experiments>
</comment>
<comment type="interaction">
    <interactant intactId="EBI-718439">
        <id>O95159</id>
    </interactant>
    <interactant intactId="EBI-10770179">
        <id>Q96A49</id>
        <label>SYAP1</label>
    </interactant>
    <organismsDiffer>false</organismsDiffer>
    <experiments>3</experiments>
</comment>
<comment type="interaction">
    <interactant intactId="EBI-718439">
        <id>O95159</id>
    </interactant>
    <interactant intactId="EBI-524909">
        <id>P21579</id>
        <label>SYT1</label>
    </interactant>
    <organismsDiffer>false</organismsDiffer>
    <experiments>3</experiments>
</comment>
<comment type="interaction">
    <interactant intactId="EBI-718439">
        <id>O95159</id>
    </interactant>
    <interactant intactId="EBI-19027521">
        <id>Q8N6K0</id>
        <label>TEX29</label>
    </interactant>
    <organismsDiffer>false</organismsDiffer>
    <experiments>3</experiments>
</comment>
<comment type="interaction">
    <interactant intactId="EBI-718439">
        <id>O95159</id>
    </interactant>
    <interactant intactId="EBI-6448756">
        <id>Q96DZ7</id>
        <label>TM4SF19</label>
    </interactant>
    <organismsDiffer>false</organismsDiffer>
    <experiments>3</experiments>
</comment>
<comment type="interaction">
    <interactant intactId="EBI-718439">
        <id>O95159</id>
    </interactant>
    <interactant intactId="EBI-2821497">
        <id>Q9BVX2</id>
        <label>TMEM106C</label>
    </interactant>
    <organismsDiffer>false</organismsDiffer>
    <experiments>3</experiments>
</comment>
<comment type="interaction">
    <interactant intactId="EBI-718439">
        <id>O95159</id>
    </interactant>
    <interactant intactId="EBI-7238458">
        <id>Q8IV31</id>
        <label>TMEM139</label>
    </interactant>
    <organismsDiffer>false</organismsDiffer>
    <experiments>3</experiments>
</comment>
<comment type="interaction">
    <interactant intactId="EBI-718439">
        <id>O95159</id>
    </interactant>
    <interactant intactId="EBI-8638294">
        <id>Q9NUH8</id>
        <label>TMEM14B</label>
    </interactant>
    <organismsDiffer>false</organismsDiffer>
    <experiments>3</experiments>
</comment>
<comment type="interaction">
    <interactant intactId="EBI-718439">
        <id>O95159</id>
    </interactant>
    <interactant intactId="EBI-10982110">
        <id>Q96Q45-2</id>
        <label>TMEM237</label>
    </interactant>
    <organismsDiffer>false</organismsDiffer>
    <experiments>3</experiments>
</comment>
<comment type="interaction">
    <interactant intactId="EBI-718439">
        <id>O95159</id>
    </interactant>
    <interactant intactId="EBI-12345267">
        <id>O15393-2</id>
        <label>TMPRSS2</label>
    </interactant>
    <organismsDiffer>false</organismsDiffer>
    <experiments>3</experiments>
</comment>
<comment type="interaction">
    <interactant intactId="EBI-718439">
        <id>O95159</id>
    </interactant>
    <interactant intactId="EBI-8994397">
        <id>Q5T7W7</id>
        <label>TSTD2</label>
    </interactant>
    <organismsDiffer>false</organismsDiffer>
    <experiments>3</experiments>
</comment>
<comment type="subcellular location">
    <subcellularLocation>
        <location evidence="3">Golgi apparatus</location>
        <location evidence="3">cis-Golgi network membrane</location>
        <topology evidence="3">Single-pass membrane protein</topology>
    </subcellularLocation>
</comment>
<comment type="tissue specificity">
    <text evidence="4">Expressed strongly in the exocrine pancreas.</text>
</comment>
<comment type="domain">
    <text>The B box-type and RING-type zinc fingers although degenerate play a central role in function of the protein.</text>
</comment>
<comment type="PTM">
    <text evidence="3">Phosphorylated.</text>
</comment>
<comment type="similarity">
    <text evidence="5">Belongs to the ZFPL1 family.</text>
</comment>
<comment type="sequence caution" evidence="5">
    <conflict type="frameshift">
        <sequence resource="EMBL-CDS" id="AAB86533"/>
    </conflict>
</comment>
<evidence type="ECO:0000255" key="1"/>
<evidence type="ECO:0000256" key="2">
    <source>
        <dbReference type="SAM" id="MobiDB-lite"/>
    </source>
</evidence>
<evidence type="ECO:0000269" key="3">
    <source>
    </source>
</evidence>
<evidence type="ECO:0000269" key="4">
    <source>
    </source>
</evidence>
<evidence type="ECO:0000305" key="5"/>
<gene>
    <name type="primary">ZFPL1</name>
</gene>
<reference key="1">
    <citation type="journal article" date="1997" name="Genome Res.">
        <title>A transcript map for the 2.8-Mb region containing the multiple endocrine neoplasia type 1 locus.</title>
        <authorList>
            <person name="Guru S.C."/>
            <person name="Agarwal S.K."/>
            <person name="Manickam P."/>
            <person name="Olufemi S.-E."/>
            <person name="Crabtree J.S."/>
            <person name="Weisemann J.M."/>
            <person name="Kester M.B."/>
            <person name="Kim Y.S."/>
            <person name="Wang Y."/>
            <person name="Emmert-Buck M.R."/>
            <person name="Liotta L.A."/>
            <person name="Spiegel A.M."/>
            <person name="Boguski M.S."/>
            <person name="Roe B.A."/>
            <person name="Collins F.S."/>
            <person name="Burns A.L."/>
            <person name="Marx S.J."/>
            <person name="Chandrasekharappa S.C."/>
        </authorList>
    </citation>
    <scope>NUCLEOTIDE SEQUENCE [MRNA]</scope>
</reference>
<reference key="2">
    <citation type="journal article" date="1998" name="Genomics">
        <title>A putative human zinc-finger gene (ZFPL1) on 11q13, highly conserved in the mouse and expressed in exocrine pancreas.</title>
        <authorList>
            <person name="Hoeppener J.W.M."/>
            <person name="De Wit M.J."/>
            <person name="Simarro-Doorten A.Y."/>
            <person name="Roijers J.F.M."/>
            <person name="van Herrewaarden H.M.C."/>
            <person name="Lips C.J.M."/>
            <person name="Parente F."/>
            <person name="Quincey D."/>
            <person name="Gaudray P."/>
            <person name="Khodaei S."/>
            <person name="Weber G."/>
            <person name="Teh B."/>
            <person name="Farnebo F."/>
            <person name="Larsson C."/>
            <person name="Zhang C.X."/>
            <person name="Calender A."/>
            <person name="Pannett A.A.J."/>
            <person name="Forbes S.A."/>
            <person name="Bassett J.H.D."/>
            <person name="Thakker R.V."/>
            <person name="Lemmens I."/>
            <person name="Van de Ven W.J.M."/>
            <person name="Kas K."/>
        </authorList>
    </citation>
    <scope>NUCLEOTIDE SEQUENCE [MRNA]</scope>
    <scope>TISSUE SPECIFICITY</scope>
</reference>
<reference key="3">
    <citation type="submission" date="1998-01" db="EMBL/GenBank/DDBJ databases">
        <title>Characterisation of a new human zinc-finger protein.</title>
        <authorList>
            <person name="Silins G.U."/>
            <person name="Grimmond S."/>
            <person name="Hayward N."/>
        </authorList>
    </citation>
    <scope>NUCLEOTIDE SEQUENCE [MRNA]</scope>
</reference>
<reference key="4">
    <citation type="journal article" date="2004" name="Nat. Genet.">
        <title>Complete sequencing and characterization of 21,243 full-length human cDNAs.</title>
        <authorList>
            <person name="Ota T."/>
            <person name="Suzuki Y."/>
            <person name="Nishikawa T."/>
            <person name="Otsuki T."/>
            <person name="Sugiyama T."/>
            <person name="Irie R."/>
            <person name="Wakamatsu A."/>
            <person name="Hayashi K."/>
            <person name="Sato H."/>
            <person name="Nagai K."/>
            <person name="Kimura K."/>
            <person name="Makita H."/>
            <person name="Sekine M."/>
            <person name="Obayashi M."/>
            <person name="Nishi T."/>
            <person name="Shibahara T."/>
            <person name="Tanaka T."/>
            <person name="Ishii S."/>
            <person name="Yamamoto J."/>
            <person name="Saito K."/>
            <person name="Kawai Y."/>
            <person name="Isono Y."/>
            <person name="Nakamura Y."/>
            <person name="Nagahari K."/>
            <person name="Murakami K."/>
            <person name="Yasuda T."/>
            <person name="Iwayanagi T."/>
            <person name="Wagatsuma M."/>
            <person name="Shiratori A."/>
            <person name="Sudo H."/>
            <person name="Hosoiri T."/>
            <person name="Kaku Y."/>
            <person name="Kodaira H."/>
            <person name="Kondo H."/>
            <person name="Sugawara M."/>
            <person name="Takahashi M."/>
            <person name="Kanda K."/>
            <person name="Yokoi T."/>
            <person name="Furuya T."/>
            <person name="Kikkawa E."/>
            <person name="Omura Y."/>
            <person name="Abe K."/>
            <person name="Kamihara K."/>
            <person name="Katsuta N."/>
            <person name="Sato K."/>
            <person name="Tanikawa M."/>
            <person name="Yamazaki M."/>
            <person name="Ninomiya K."/>
            <person name="Ishibashi T."/>
            <person name="Yamashita H."/>
            <person name="Murakawa K."/>
            <person name="Fujimori K."/>
            <person name="Tanai H."/>
            <person name="Kimata M."/>
            <person name="Watanabe M."/>
            <person name="Hiraoka S."/>
            <person name="Chiba Y."/>
            <person name="Ishida S."/>
            <person name="Ono Y."/>
            <person name="Takiguchi S."/>
            <person name="Watanabe S."/>
            <person name="Yosida M."/>
            <person name="Hotuta T."/>
            <person name="Kusano J."/>
            <person name="Kanehori K."/>
            <person name="Takahashi-Fujii A."/>
            <person name="Hara H."/>
            <person name="Tanase T.-O."/>
            <person name="Nomura Y."/>
            <person name="Togiya S."/>
            <person name="Komai F."/>
            <person name="Hara R."/>
            <person name="Takeuchi K."/>
            <person name="Arita M."/>
            <person name="Imose N."/>
            <person name="Musashino K."/>
            <person name="Yuuki H."/>
            <person name="Oshima A."/>
            <person name="Sasaki N."/>
            <person name="Aotsuka S."/>
            <person name="Yoshikawa Y."/>
            <person name="Matsunawa H."/>
            <person name="Ichihara T."/>
            <person name="Shiohata N."/>
            <person name="Sano S."/>
            <person name="Moriya S."/>
            <person name="Momiyama H."/>
            <person name="Satoh N."/>
            <person name="Takami S."/>
            <person name="Terashima Y."/>
            <person name="Suzuki O."/>
            <person name="Nakagawa S."/>
            <person name="Senoh A."/>
            <person name="Mizoguchi H."/>
            <person name="Goto Y."/>
            <person name="Shimizu F."/>
            <person name="Wakebe H."/>
            <person name="Hishigaki H."/>
            <person name="Watanabe T."/>
            <person name="Sugiyama A."/>
            <person name="Takemoto M."/>
            <person name="Kawakami B."/>
            <person name="Yamazaki M."/>
            <person name="Watanabe K."/>
            <person name="Kumagai A."/>
            <person name="Itakura S."/>
            <person name="Fukuzumi Y."/>
            <person name="Fujimori Y."/>
            <person name="Komiyama M."/>
            <person name="Tashiro H."/>
            <person name="Tanigami A."/>
            <person name="Fujiwara T."/>
            <person name="Ono T."/>
            <person name="Yamada K."/>
            <person name="Fujii Y."/>
            <person name="Ozaki K."/>
            <person name="Hirao M."/>
            <person name="Ohmori Y."/>
            <person name="Kawabata A."/>
            <person name="Hikiji T."/>
            <person name="Kobatake N."/>
            <person name="Inagaki H."/>
            <person name="Ikema Y."/>
            <person name="Okamoto S."/>
            <person name="Okitani R."/>
            <person name="Kawakami T."/>
            <person name="Noguchi S."/>
            <person name="Itoh T."/>
            <person name="Shigeta K."/>
            <person name="Senba T."/>
            <person name="Matsumura K."/>
            <person name="Nakajima Y."/>
            <person name="Mizuno T."/>
            <person name="Morinaga M."/>
            <person name="Sasaki M."/>
            <person name="Togashi T."/>
            <person name="Oyama M."/>
            <person name="Hata H."/>
            <person name="Watanabe M."/>
            <person name="Komatsu T."/>
            <person name="Mizushima-Sugano J."/>
            <person name="Satoh T."/>
            <person name="Shirai Y."/>
            <person name="Takahashi Y."/>
            <person name="Nakagawa K."/>
            <person name="Okumura K."/>
            <person name="Nagase T."/>
            <person name="Nomura N."/>
            <person name="Kikuchi H."/>
            <person name="Masuho Y."/>
            <person name="Yamashita R."/>
            <person name="Nakai K."/>
            <person name="Yada T."/>
            <person name="Nakamura Y."/>
            <person name="Ohara O."/>
            <person name="Isogai T."/>
            <person name="Sugano S."/>
        </authorList>
    </citation>
    <scope>NUCLEOTIDE SEQUENCE [LARGE SCALE MRNA]</scope>
    <source>
        <tissue>Neuroblastoma</tissue>
    </source>
</reference>
<reference key="5">
    <citation type="journal article" date="2006" name="Nature">
        <title>Human chromosome 11 DNA sequence and analysis including novel gene identification.</title>
        <authorList>
            <person name="Taylor T.D."/>
            <person name="Noguchi H."/>
            <person name="Totoki Y."/>
            <person name="Toyoda A."/>
            <person name="Kuroki Y."/>
            <person name="Dewar K."/>
            <person name="Lloyd C."/>
            <person name="Itoh T."/>
            <person name="Takeda T."/>
            <person name="Kim D.-W."/>
            <person name="She X."/>
            <person name="Barlow K.F."/>
            <person name="Bloom T."/>
            <person name="Bruford E."/>
            <person name="Chang J.L."/>
            <person name="Cuomo C.A."/>
            <person name="Eichler E."/>
            <person name="FitzGerald M.G."/>
            <person name="Jaffe D.B."/>
            <person name="LaButti K."/>
            <person name="Nicol R."/>
            <person name="Park H.-S."/>
            <person name="Seaman C."/>
            <person name="Sougnez C."/>
            <person name="Yang X."/>
            <person name="Zimmer A.R."/>
            <person name="Zody M.C."/>
            <person name="Birren B.W."/>
            <person name="Nusbaum C."/>
            <person name="Fujiyama A."/>
            <person name="Hattori M."/>
            <person name="Rogers J."/>
            <person name="Lander E.S."/>
            <person name="Sakaki Y."/>
        </authorList>
    </citation>
    <scope>NUCLEOTIDE SEQUENCE [LARGE SCALE GENOMIC DNA]</scope>
</reference>
<reference key="6">
    <citation type="submission" date="2005-07" db="EMBL/GenBank/DDBJ databases">
        <authorList>
            <person name="Mural R.J."/>
            <person name="Istrail S."/>
            <person name="Sutton G.G."/>
            <person name="Florea L."/>
            <person name="Halpern A.L."/>
            <person name="Mobarry C.M."/>
            <person name="Lippert R."/>
            <person name="Walenz B."/>
            <person name="Shatkay H."/>
            <person name="Dew I."/>
            <person name="Miller J.R."/>
            <person name="Flanigan M.J."/>
            <person name="Edwards N.J."/>
            <person name="Bolanos R."/>
            <person name="Fasulo D."/>
            <person name="Halldorsson B.V."/>
            <person name="Hannenhalli S."/>
            <person name="Turner R."/>
            <person name="Yooseph S."/>
            <person name="Lu F."/>
            <person name="Nusskern D.R."/>
            <person name="Shue B.C."/>
            <person name="Zheng X.H."/>
            <person name="Zhong F."/>
            <person name="Delcher A.L."/>
            <person name="Huson D.H."/>
            <person name="Kravitz S.A."/>
            <person name="Mouchard L."/>
            <person name="Reinert K."/>
            <person name="Remington K.A."/>
            <person name="Clark A.G."/>
            <person name="Waterman M.S."/>
            <person name="Eichler E.E."/>
            <person name="Adams M.D."/>
            <person name="Hunkapiller M.W."/>
            <person name="Myers E.W."/>
            <person name="Venter J.C."/>
        </authorList>
    </citation>
    <scope>NUCLEOTIDE SEQUENCE [LARGE SCALE GENOMIC DNA]</scope>
</reference>
<reference key="7">
    <citation type="journal article" date="2004" name="Genome Res.">
        <title>The status, quality, and expansion of the NIH full-length cDNA project: the Mammalian Gene Collection (MGC).</title>
        <authorList>
            <consortium name="The MGC Project Team"/>
        </authorList>
    </citation>
    <scope>NUCLEOTIDE SEQUENCE [LARGE SCALE MRNA]</scope>
    <source>
        <tissue>Muscle</tissue>
    </source>
</reference>
<reference key="8">
    <citation type="journal article" date="2008" name="EMBO J.">
        <title>ZFPL1, a novel ring finger protein required for cis-Golgi integrity and efficient ER-to-Golgi transport.</title>
        <authorList>
            <person name="Chiu C.-F."/>
            <person name="Ghanekar Y."/>
            <person name="Frost L."/>
            <person name="Diao A."/>
            <person name="Morrison D."/>
            <person name="McKenzie E."/>
            <person name="Lowe M."/>
        </authorList>
    </citation>
    <scope>FUNCTION</scope>
    <scope>SUBCELLULAR LOCATION</scope>
    <scope>TOPOLOGY</scope>
    <scope>PHOSPHORYLATION</scope>
    <scope>INTERACTION WITH GOLGA2</scope>
    <scope>MUTAGENESIS OF CYS-27 AND CYS-53</scope>
</reference>
<reference key="9">
    <citation type="journal article" date="2012" name="Proc. Natl. Acad. Sci. U.S.A.">
        <title>N-terminal acetylome analyses and functional insights of the N-terminal acetyltransferase NatB.</title>
        <authorList>
            <person name="Van Damme P."/>
            <person name="Lasa M."/>
            <person name="Polevoda B."/>
            <person name="Gazquez C."/>
            <person name="Elosegui-Artola A."/>
            <person name="Kim D.S."/>
            <person name="De Juan-Pardo E."/>
            <person name="Demeyer K."/>
            <person name="Hole K."/>
            <person name="Larrea E."/>
            <person name="Timmerman E."/>
            <person name="Prieto J."/>
            <person name="Arnesen T."/>
            <person name="Sherman F."/>
            <person name="Gevaert K."/>
            <person name="Aldabe R."/>
        </authorList>
    </citation>
    <scope>IDENTIFICATION BY MASS SPECTROMETRY [LARGE SCALE ANALYSIS]</scope>
</reference>
<accession>O95159</accession>
<accession>A8K7E9</accession>
<accession>O14616</accession>
<accession>Q9UID0</accession>
<keyword id="KW-0931">ER-Golgi transport</keyword>
<keyword id="KW-0333">Golgi apparatus</keyword>
<keyword id="KW-0472">Membrane</keyword>
<keyword id="KW-0479">Metal-binding</keyword>
<keyword id="KW-0597">Phosphoprotein</keyword>
<keyword id="KW-1267">Proteomics identification</keyword>
<keyword id="KW-1185">Reference proteome</keyword>
<keyword id="KW-0812">Transmembrane</keyword>
<keyword id="KW-1133">Transmembrane helix</keyword>
<keyword id="KW-0813">Transport</keyword>
<keyword id="KW-0862">Zinc</keyword>
<keyword id="KW-0863">Zinc-finger</keyword>